<accession>Q57TD5</accession>
<dbReference type="EC" id="6.3.2.13" evidence="1"/>
<dbReference type="EMBL" id="AE017220">
    <property type="protein sequence ID" value="AAX64026.1"/>
    <property type="molecule type" value="Genomic_DNA"/>
</dbReference>
<dbReference type="RefSeq" id="WP_001538982.1">
    <property type="nucleotide sequence ID" value="NC_006905.1"/>
</dbReference>
<dbReference type="SMR" id="Q57TD5"/>
<dbReference type="KEGG" id="sec:SCH_0120"/>
<dbReference type="HOGENOM" id="CLU_022291_3_2_6"/>
<dbReference type="UniPathway" id="UPA00219"/>
<dbReference type="Proteomes" id="UP000000538">
    <property type="component" value="Chromosome"/>
</dbReference>
<dbReference type="GO" id="GO:0005737">
    <property type="term" value="C:cytoplasm"/>
    <property type="evidence" value="ECO:0007669"/>
    <property type="project" value="UniProtKB-SubCell"/>
</dbReference>
<dbReference type="GO" id="GO:0005524">
    <property type="term" value="F:ATP binding"/>
    <property type="evidence" value="ECO:0007669"/>
    <property type="project" value="UniProtKB-UniRule"/>
</dbReference>
<dbReference type="GO" id="GO:0000287">
    <property type="term" value="F:magnesium ion binding"/>
    <property type="evidence" value="ECO:0007669"/>
    <property type="project" value="UniProtKB-UniRule"/>
</dbReference>
<dbReference type="GO" id="GO:0008765">
    <property type="term" value="F:UDP-N-acetylmuramoylalanyl-D-glutamate-2,6-diaminopimelate ligase activity"/>
    <property type="evidence" value="ECO:0007669"/>
    <property type="project" value="UniProtKB-UniRule"/>
</dbReference>
<dbReference type="GO" id="GO:0051301">
    <property type="term" value="P:cell division"/>
    <property type="evidence" value="ECO:0007669"/>
    <property type="project" value="UniProtKB-KW"/>
</dbReference>
<dbReference type="GO" id="GO:0071555">
    <property type="term" value="P:cell wall organization"/>
    <property type="evidence" value="ECO:0007669"/>
    <property type="project" value="UniProtKB-KW"/>
</dbReference>
<dbReference type="GO" id="GO:0009252">
    <property type="term" value="P:peptidoglycan biosynthetic process"/>
    <property type="evidence" value="ECO:0007669"/>
    <property type="project" value="UniProtKB-UniRule"/>
</dbReference>
<dbReference type="GO" id="GO:0008360">
    <property type="term" value="P:regulation of cell shape"/>
    <property type="evidence" value="ECO:0007669"/>
    <property type="project" value="UniProtKB-KW"/>
</dbReference>
<dbReference type="FunFam" id="3.40.1190.10:FF:000006">
    <property type="entry name" value="UDP-N-acetylmuramoyl-L-alanyl-D-glutamate--2,6-diaminopimelate ligase"/>
    <property type="match status" value="1"/>
</dbReference>
<dbReference type="FunFam" id="3.40.1390.10:FF:000002">
    <property type="entry name" value="UDP-N-acetylmuramoyl-L-alanyl-D-glutamate--2,6-diaminopimelate ligase"/>
    <property type="match status" value="1"/>
</dbReference>
<dbReference type="FunFam" id="3.90.190.20:FF:000006">
    <property type="entry name" value="UDP-N-acetylmuramoyl-L-alanyl-D-glutamate--2,6-diaminopimelate ligase"/>
    <property type="match status" value="1"/>
</dbReference>
<dbReference type="Gene3D" id="3.90.190.20">
    <property type="entry name" value="Mur ligase, C-terminal domain"/>
    <property type="match status" value="1"/>
</dbReference>
<dbReference type="Gene3D" id="3.40.1190.10">
    <property type="entry name" value="Mur-like, catalytic domain"/>
    <property type="match status" value="1"/>
</dbReference>
<dbReference type="Gene3D" id="3.40.1390.10">
    <property type="entry name" value="MurE/MurF, N-terminal domain"/>
    <property type="match status" value="1"/>
</dbReference>
<dbReference type="HAMAP" id="MF_00208">
    <property type="entry name" value="MurE"/>
    <property type="match status" value="1"/>
</dbReference>
<dbReference type="InterPro" id="IPR036565">
    <property type="entry name" value="Mur-like_cat_sf"/>
</dbReference>
<dbReference type="InterPro" id="IPR004101">
    <property type="entry name" value="Mur_ligase_C"/>
</dbReference>
<dbReference type="InterPro" id="IPR036615">
    <property type="entry name" value="Mur_ligase_C_dom_sf"/>
</dbReference>
<dbReference type="InterPro" id="IPR013221">
    <property type="entry name" value="Mur_ligase_cen"/>
</dbReference>
<dbReference type="InterPro" id="IPR000713">
    <property type="entry name" value="Mur_ligase_N"/>
</dbReference>
<dbReference type="InterPro" id="IPR035911">
    <property type="entry name" value="MurE/MurF_N"/>
</dbReference>
<dbReference type="InterPro" id="IPR005761">
    <property type="entry name" value="UDP-N-AcMur-Glu-dNH2Pim_ligase"/>
</dbReference>
<dbReference type="NCBIfam" id="TIGR01085">
    <property type="entry name" value="murE"/>
    <property type="match status" value="1"/>
</dbReference>
<dbReference type="NCBIfam" id="NF001123">
    <property type="entry name" value="PRK00139.1-1"/>
    <property type="match status" value="1"/>
</dbReference>
<dbReference type="NCBIfam" id="NF001124">
    <property type="entry name" value="PRK00139.1-2"/>
    <property type="match status" value="1"/>
</dbReference>
<dbReference type="NCBIfam" id="NF001126">
    <property type="entry name" value="PRK00139.1-4"/>
    <property type="match status" value="1"/>
</dbReference>
<dbReference type="PANTHER" id="PTHR23135">
    <property type="entry name" value="MUR LIGASE FAMILY MEMBER"/>
    <property type="match status" value="1"/>
</dbReference>
<dbReference type="PANTHER" id="PTHR23135:SF4">
    <property type="entry name" value="UDP-N-ACETYLMURAMOYL-L-ALANYL-D-GLUTAMATE--2,6-DIAMINOPIMELATE LIGASE MURE HOMOLOG, CHLOROPLASTIC"/>
    <property type="match status" value="1"/>
</dbReference>
<dbReference type="Pfam" id="PF01225">
    <property type="entry name" value="Mur_ligase"/>
    <property type="match status" value="1"/>
</dbReference>
<dbReference type="Pfam" id="PF02875">
    <property type="entry name" value="Mur_ligase_C"/>
    <property type="match status" value="1"/>
</dbReference>
<dbReference type="Pfam" id="PF08245">
    <property type="entry name" value="Mur_ligase_M"/>
    <property type="match status" value="1"/>
</dbReference>
<dbReference type="SUPFAM" id="SSF53623">
    <property type="entry name" value="MurD-like peptide ligases, catalytic domain"/>
    <property type="match status" value="1"/>
</dbReference>
<dbReference type="SUPFAM" id="SSF53244">
    <property type="entry name" value="MurD-like peptide ligases, peptide-binding domain"/>
    <property type="match status" value="1"/>
</dbReference>
<dbReference type="SUPFAM" id="SSF63418">
    <property type="entry name" value="MurE/MurF N-terminal domain"/>
    <property type="match status" value="1"/>
</dbReference>
<protein>
    <recommendedName>
        <fullName evidence="1">UDP-N-acetylmuramoyl-L-alanyl-D-glutamate--2,6-diaminopimelate ligase</fullName>
        <ecNumber evidence="1">6.3.2.13</ecNumber>
    </recommendedName>
    <alternativeName>
        <fullName evidence="1">Meso-A2pm-adding enzyme</fullName>
    </alternativeName>
    <alternativeName>
        <fullName evidence="1">Meso-diaminopimelate-adding enzyme</fullName>
    </alternativeName>
    <alternativeName>
        <fullName evidence="1">UDP-MurNAc-L-Ala-D-Glu:meso-diaminopimelate ligase</fullName>
    </alternativeName>
    <alternativeName>
        <fullName evidence="1">UDP-MurNAc-tripeptide synthetase</fullName>
    </alternativeName>
    <alternativeName>
        <fullName evidence="1">UDP-N-acetylmuramyl-tripeptide synthetase</fullName>
    </alternativeName>
</protein>
<organism>
    <name type="scientific">Salmonella choleraesuis (strain SC-B67)</name>
    <dbReference type="NCBI Taxonomy" id="321314"/>
    <lineage>
        <taxon>Bacteria</taxon>
        <taxon>Pseudomonadati</taxon>
        <taxon>Pseudomonadota</taxon>
        <taxon>Gammaproteobacteria</taxon>
        <taxon>Enterobacterales</taxon>
        <taxon>Enterobacteriaceae</taxon>
        <taxon>Salmonella</taxon>
    </lineage>
</organism>
<evidence type="ECO:0000255" key="1">
    <source>
        <dbReference type="HAMAP-Rule" id="MF_00208"/>
    </source>
</evidence>
<keyword id="KW-0067">ATP-binding</keyword>
<keyword id="KW-0131">Cell cycle</keyword>
<keyword id="KW-0132">Cell division</keyword>
<keyword id="KW-0133">Cell shape</keyword>
<keyword id="KW-0961">Cell wall biogenesis/degradation</keyword>
<keyword id="KW-0963">Cytoplasm</keyword>
<keyword id="KW-0436">Ligase</keyword>
<keyword id="KW-0460">Magnesium</keyword>
<keyword id="KW-0547">Nucleotide-binding</keyword>
<keyword id="KW-0573">Peptidoglycan synthesis</keyword>
<proteinExistence type="inferred from homology"/>
<feature type="chain" id="PRO_1000012376" description="UDP-N-acetylmuramoyl-L-alanyl-D-glutamate--2,6-diaminopimelate ligase">
    <location>
        <begin position="1"/>
        <end position="495"/>
    </location>
</feature>
<feature type="short sequence motif" description="Meso-diaminopimelate recognition motif">
    <location>
        <begin position="414"/>
        <end position="417"/>
    </location>
</feature>
<feature type="binding site" evidence="1">
    <location>
        <position position="27"/>
    </location>
    <ligand>
        <name>UDP-N-acetyl-alpha-D-muramoyl-L-alanyl-D-glutamate</name>
        <dbReference type="ChEBI" id="CHEBI:83900"/>
    </ligand>
</feature>
<feature type="binding site" evidence="1">
    <location>
        <position position="29"/>
    </location>
    <ligand>
        <name>UDP-N-acetyl-alpha-D-muramoyl-L-alanyl-D-glutamate</name>
        <dbReference type="ChEBI" id="CHEBI:83900"/>
    </ligand>
</feature>
<feature type="binding site" evidence="1">
    <location>
        <begin position="44"/>
        <end position="46"/>
    </location>
    <ligand>
        <name>UDP-N-acetyl-alpha-D-muramoyl-L-alanyl-D-glutamate</name>
        <dbReference type="ChEBI" id="CHEBI:83900"/>
    </ligand>
</feature>
<feature type="binding site" evidence="1">
    <location>
        <begin position="116"/>
        <end position="122"/>
    </location>
    <ligand>
        <name>ATP</name>
        <dbReference type="ChEBI" id="CHEBI:30616"/>
    </ligand>
</feature>
<feature type="binding site" evidence="1">
    <location>
        <position position="157"/>
    </location>
    <ligand>
        <name>UDP-N-acetyl-alpha-D-muramoyl-L-alanyl-D-glutamate</name>
        <dbReference type="ChEBI" id="CHEBI:83900"/>
    </ligand>
</feature>
<feature type="binding site" evidence="1">
    <location>
        <begin position="158"/>
        <end position="159"/>
    </location>
    <ligand>
        <name>UDP-N-acetyl-alpha-D-muramoyl-L-alanyl-D-glutamate</name>
        <dbReference type="ChEBI" id="CHEBI:83900"/>
    </ligand>
</feature>
<feature type="binding site" evidence="1">
    <location>
        <position position="185"/>
    </location>
    <ligand>
        <name>UDP-N-acetyl-alpha-D-muramoyl-L-alanyl-D-glutamate</name>
        <dbReference type="ChEBI" id="CHEBI:83900"/>
    </ligand>
</feature>
<feature type="binding site" evidence="1">
    <location>
        <position position="191"/>
    </location>
    <ligand>
        <name>UDP-N-acetyl-alpha-D-muramoyl-L-alanyl-D-glutamate</name>
        <dbReference type="ChEBI" id="CHEBI:83900"/>
    </ligand>
</feature>
<feature type="binding site" evidence="1">
    <location>
        <position position="193"/>
    </location>
    <ligand>
        <name>UDP-N-acetyl-alpha-D-muramoyl-L-alanyl-D-glutamate</name>
        <dbReference type="ChEBI" id="CHEBI:83900"/>
    </ligand>
</feature>
<feature type="binding site" evidence="1">
    <location>
        <position position="390"/>
    </location>
    <ligand>
        <name>meso-2,6-diaminopimelate</name>
        <dbReference type="ChEBI" id="CHEBI:57791"/>
    </ligand>
</feature>
<feature type="binding site" evidence="1">
    <location>
        <begin position="414"/>
        <end position="417"/>
    </location>
    <ligand>
        <name>meso-2,6-diaminopimelate</name>
        <dbReference type="ChEBI" id="CHEBI:57791"/>
    </ligand>
</feature>
<feature type="binding site" evidence="1">
    <location>
        <position position="465"/>
    </location>
    <ligand>
        <name>meso-2,6-diaminopimelate</name>
        <dbReference type="ChEBI" id="CHEBI:57791"/>
    </ligand>
</feature>
<feature type="binding site" evidence="1">
    <location>
        <position position="469"/>
    </location>
    <ligand>
        <name>meso-2,6-diaminopimelate</name>
        <dbReference type="ChEBI" id="CHEBI:57791"/>
    </ligand>
</feature>
<feature type="modified residue" description="N6-carboxylysine" evidence="1">
    <location>
        <position position="225"/>
    </location>
</feature>
<reference key="1">
    <citation type="journal article" date="2005" name="Nucleic Acids Res.">
        <title>The genome sequence of Salmonella enterica serovar Choleraesuis, a highly invasive and resistant zoonotic pathogen.</title>
        <authorList>
            <person name="Chiu C.-H."/>
            <person name="Tang P."/>
            <person name="Chu C."/>
            <person name="Hu S."/>
            <person name="Bao Q."/>
            <person name="Yu J."/>
            <person name="Chou Y.-Y."/>
            <person name="Wang H.-S."/>
            <person name="Lee Y.-S."/>
        </authorList>
    </citation>
    <scope>NUCLEOTIDE SEQUENCE [LARGE SCALE GENOMIC DNA]</scope>
    <source>
        <strain>SC-B67</strain>
    </source>
</reference>
<sequence length="495" mass="53343">MADRNLRDLLAPWVAGLPARELREMTLDSRVAAAGDLFVAVVGHQADGRRYIPQAIAQGVAAIIAEAKDEATDGEIREMHGVPVVYLNQLNERLSALAGRFYHEPSENMRLVAVTGTNGKTTTTQLLAQWSQLLGETSAVMGTVGNGLLGKVIPTENTTGSAVDVQHVLASLVAQGATFGAMEVSSHGLVQHRVAALKFAASVFTNLSRDHLDYHGDMAHYEAAKWMLYSTHHHGQAIVNADDEVGRRWLASLPDAVAVSMEGHINPNCHGRWLKAEAVEYHDRGATIRFASSWGDGEIESRLMGAFNVSNLLLALATLLALGYPLTNLLKTAARLQPVCGRMEVFTAPGKPTVVVDYAHTPDALEKALQAARLHCAGKLWCVFGCGGDRDKGKRPLMGAIAEEFADIVVVTDDNPRTEEPRAIINDILAGMLDAGQVRVMEGRTEAVTNAIMQAKDNDVVLIAGKGHEDYQIVGTQRLDYSDRVTAARLLGVIA</sequence>
<name>MURE_SALCH</name>
<gene>
    <name evidence="1" type="primary">murE</name>
    <name type="ordered locus">SCH_0120</name>
</gene>
<comment type="function">
    <text evidence="1">Catalyzes the addition of meso-diaminopimelic acid to the nucleotide precursor UDP-N-acetylmuramoyl-L-alanyl-D-glutamate (UMAG) in the biosynthesis of bacterial cell-wall peptidoglycan.</text>
</comment>
<comment type="catalytic activity">
    <reaction evidence="1">
        <text>UDP-N-acetyl-alpha-D-muramoyl-L-alanyl-D-glutamate + meso-2,6-diaminopimelate + ATP = UDP-N-acetyl-alpha-D-muramoyl-L-alanyl-gamma-D-glutamyl-meso-2,6-diaminopimelate + ADP + phosphate + H(+)</text>
        <dbReference type="Rhea" id="RHEA:23676"/>
        <dbReference type="ChEBI" id="CHEBI:15378"/>
        <dbReference type="ChEBI" id="CHEBI:30616"/>
        <dbReference type="ChEBI" id="CHEBI:43474"/>
        <dbReference type="ChEBI" id="CHEBI:57791"/>
        <dbReference type="ChEBI" id="CHEBI:83900"/>
        <dbReference type="ChEBI" id="CHEBI:83905"/>
        <dbReference type="ChEBI" id="CHEBI:456216"/>
        <dbReference type="EC" id="6.3.2.13"/>
    </reaction>
</comment>
<comment type="cofactor">
    <cofactor evidence="1">
        <name>Mg(2+)</name>
        <dbReference type="ChEBI" id="CHEBI:18420"/>
    </cofactor>
</comment>
<comment type="pathway">
    <text evidence="1">Cell wall biogenesis; peptidoglycan biosynthesis.</text>
</comment>
<comment type="subcellular location">
    <subcellularLocation>
        <location evidence="1">Cytoplasm</location>
    </subcellularLocation>
</comment>
<comment type="PTM">
    <text evidence="1">Carboxylation is probably crucial for Mg(2+) binding and, consequently, for the gamma-phosphate positioning of ATP.</text>
</comment>
<comment type="similarity">
    <text evidence="1">Belongs to the MurCDEF family. MurE subfamily.</text>
</comment>